<dbReference type="EMBL" id="M65174">
    <property type="protein sequence ID" value="AAA43712.1"/>
    <property type="molecule type" value="Genomic_RNA"/>
</dbReference>
<dbReference type="PIR" id="JQ1916">
    <property type="entry name" value="JQ1916"/>
</dbReference>
<dbReference type="SMR" id="Q67378"/>
<dbReference type="GlyCosmos" id="Q67378">
    <property type="glycosylation" value="7 sites, No reported glycans"/>
</dbReference>
<dbReference type="GO" id="GO:0020002">
    <property type="term" value="C:host cell plasma membrane"/>
    <property type="evidence" value="ECO:0007669"/>
    <property type="project" value="UniProtKB-SubCell"/>
</dbReference>
<dbReference type="GO" id="GO:0016020">
    <property type="term" value="C:membrane"/>
    <property type="evidence" value="ECO:0007669"/>
    <property type="project" value="UniProtKB-KW"/>
</dbReference>
<dbReference type="GO" id="GO:0019031">
    <property type="term" value="C:viral envelope"/>
    <property type="evidence" value="ECO:0007669"/>
    <property type="project" value="UniProtKB-KW"/>
</dbReference>
<dbReference type="GO" id="GO:0055036">
    <property type="term" value="C:virion membrane"/>
    <property type="evidence" value="ECO:0007669"/>
    <property type="project" value="UniProtKB-SubCell"/>
</dbReference>
<dbReference type="GO" id="GO:0046789">
    <property type="term" value="F:host cell surface receptor binding"/>
    <property type="evidence" value="ECO:0007669"/>
    <property type="project" value="InterPro"/>
</dbReference>
<dbReference type="GO" id="GO:0039654">
    <property type="term" value="P:fusion of virus membrane with host endosome membrane"/>
    <property type="evidence" value="ECO:0007669"/>
    <property type="project" value="UniProtKB-KW"/>
</dbReference>
<dbReference type="GO" id="GO:0019064">
    <property type="term" value="P:fusion of virus membrane with host plasma membrane"/>
    <property type="evidence" value="ECO:0007669"/>
    <property type="project" value="InterPro"/>
</dbReference>
<dbReference type="GO" id="GO:0046718">
    <property type="term" value="P:symbiont entry into host cell"/>
    <property type="evidence" value="ECO:0007669"/>
    <property type="project" value="UniProtKB-KW"/>
</dbReference>
<dbReference type="GO" id="GO:0019062">
    <property type="term" value="P:virion attachment to host cell"/>
    <property type="evidence" value="ECO:0007669"/>
    <property type="project" value="UniProtKB-KW"/>
</dbReference>
<dbReference type="Gene3D" id="3.90.209.20">
    <property type="match status" value="1"/>
</dbReference>
<dbReference type="Gene3D" id="2.10.77.10">
    <property type="entry name" value="Hemagglutinin Chain A, Domain 2"/>
    <property type="match status" value="1"/>
</dbReference>
<dbReference type="InterPro" id="IPR008980">
    <property type="entry name" value="Capsid_hemagglutn"/>
</dbReference>
<dbReference type="InterPro" id="IPR013828">
    <property type="entry name" value="Hemagglutn_HA1_a/b_dom_sf"/>
</dbReference>
<dbReference type="InterPro" id="IPR001364">
    <property type="entry name" value="Hemagglutn_influenz_A/B"/>
</dbReference>
<dbReference type="Pfam" id="PF00509">
    <property type="entry name" value="Hemagglutinin"/>
    <property type="match status" value="1"/>
</dbReference>
<dbReference type="SUPFAM" id="SSF49818">
    <property type="entry name" value="Viral protein domain"/>
    <property type="match status" value="1"/>
</dbReference>
<proteinExistence type="inferred from homology"/>
<accession>Q67378</accession>
<name>HEMA_INBTE</name>
<gene>
    <name type="primary">HA</name>
</gene>
<organism>
    <name type="scientific">Influenza B virus (strain B/Texas/1/1991)</name>
    <dbReference type="NCBI Taxonomy" id="291799"/>
    <lineage>
        <taxon>Viruses</taxon>
        <taxon>Riboviria</taxon>
        <taxon>Orthornavirae</taxon>
        <taxon>Negarnaviricota</taxon>
        <taxon>Polyploviricotina</taxon>
        <taxon>Insthoviricetes</taxon>
        <taxon>Articulavirales</taxon>
        <taxon>Orthomyxoviridae</taxon>
        <taxon>Betainfluenzavirus</taxon>
        <taxon>Betainfluenzavirus influenzae</taxon>
        <taxon>Influenza B virus</taxon>
    </lineage>
</organism>
<feature type="signal peptide" evidence="2">
    <location>
        <begin position="1"/>
        <end position="15"/>
    </location>
</feature>
<feature type="chain" id="PRO_0000039131" description="Hemagglutinin HA1 chain" evidence="1">
    <location>
        <begin position="16"/>
        <end position="360"/>
    </location>
</feature>
<feature type="glycosylation site" description="N-linked (GlcNAc...) asparagine; by host" evidence="2">
    <location>
        <position position="40"/>
    </location>
</feature>
<feature type="glycosylation site" description="N-linked (GlcNAc...) asparagine; by host" evidence="2">
    <location>
        <position position="74"/>
    </location>
</feature>
<feature type="glycosylation site" description="N-linked (GlcNAc...) asparagine; by host" evidence="2">
    <location>
        <position position="160"/>
    </location>
</feature>
<feature type="glycosylation site" description="N-linked (GlcNAc...) asparagine; by host" evidence="2">
    <location>
        <position position="179"/>
    </location>
</feature>
<feature type="glycosylation site" description="N-linked (GlcNAc...) asparagine; by host" evidence="2">
    <location>
        <position position="246"/>
    </location>
</feature>
<feature type="glycosylation site" description="N-linked (GlcNAc...) asparagine; by host" evidence="2">
    <location>
        <position position="317"/>
    </location>
</feature>
<feature type="glycosylation site" description="N-linked (GlcNAc...) asparagine; by host" evidence="2">
    <location>
        <position position="346"/>
    </location>
</feature>
<feature type="non-terminal residue">
    <location>
        <position position="360"/>
    </location>
</feature>
<organismHost>
    <name type="scientific">Homo sapiens</name>
    <name type="common">Human</name>
    <dbReference type="NCBI Taxonomy" id="9606"/>
</organismHost>
<keyword id="KW-1015">Disulfide bond</keyword>
<keyword id="KW-1170">Fusion of virus membrane with host endosomal membrane</keyword>
<keyword id="KW-1168">Fusion of virus membrane with host membrane</keyword>
<keyword id="KW-0325">Glycoprotein</keyword>
<keyword id="KW-0348">Hemagglutinin</keyword>
<keyword id="KW-1032">Host cell membrane</keyword>
<keyword id="KW-1043">Host membrane</keyword>
<keyword id="KW-0945">Host-virus interaction</keyword>
<keyword id="KW-0449">Lipoprotein</keyword>
<keyword id="KW-0472">Membrane</keyword>
<keyword id="KW-0564">Palmitate</keyword>
<keyword id="KW-0732">Signal</keyword>
<keyword id="KW-0812">Transmembrane</keyword>
<keyword id="KW-1161">Viral attachment to host cell</keyword>
<keyword id="KW-0261">Viral envelope protein</keyword>
<keyword id="KW-1162">Viral penetration into host cytoplasm</keyword>
<keyword id="KW-0946">Virion</keyword>
<keyword id="KW-1160">Virus entry into host cell</keyword>
<reference key="1">
    <citation type="journal article" date="1992" name="J. Gen. Virol.">
        <title>Antigenic and genetic characterization of the haemagglutinins of recent cocirculating strains of influenza B virus.</title>
        <authorList>
            <person name="Rota P.A."/>
            <person name="Hemphill M."/>
            <person name="Whistler T."/>
            <person name="Regnery H.L."/>
            <person name="Kendal A.P."/>
        </authorList>
    </citation>
    <scope>NUCLEOTIDE SEQUENCE [GENOMIC RNA]</scope>
</reference>
<protein>
    <recommendedName>
        <fullName>Hemagglutinin</fullName>
    </recommendedName>
    <component>
        <recommendedName>
            <fullName>Hemagglutinin HA1 chain</fullName>
        </recommendedName>
    </component>
</protein>
<comment type="function">
    <text>Binds to sialic acid-containing receptors on the cell surface, bringing about the attachment of the virus particle to the cell. Plays a major role in the determination of host range restriction and virulence. Class I viral fusion protein. Responsible for penetration of the virus into the cell cytoplasm by mediating the fusion of the membrane of the endocytosed virus particle with the endosomal membrane. Low pH in endosomes induce an irreversible conformational change in HA2, releasing the fusion hydrophobic peptide. Several trimers are required to form a competent fusion pore.</text>
</comment>
<comment type="subunit">
    <text>Homotrimer of disulfide-linked HA1-HA2.</text>
</comment>
<comment type="subcellular location">
    <subcellularLocation>
        <location evidence="3">Virion membrane</location>
        <topology evidence="3">Single-pass type I membrane protein</topology>
    </subcellularLocation>
    <subcellularLocation>
        <location>Host apical cell membrane</location>
        <topology>Single-pass type I membrane protein</topology>
    </subcellularLocation>
    <text>Targeted to the apical plasma membrane in epithelial polarized cells through a signal present in the transmembrane domain. Associated with glycosphingolipid- and cholesterol-enriched detergent-resistant lipid rafts.</text>
</comment>
<comment type="PTM">
    <text evidence="1">In natural infection, inactive HA is matured into HA1 and HA2 outside the cell by one or more trypsin-like, arginine-specific endoprotease secreted by the bronchial epithelial cells. One identified protease that may be involved in this process is secreted in lungs by club cells (By similarity).</text>
</comment>
<comment type="PTM">
    <text evidence="1">Palmitoylated.</text>
</comment>
<comment type="miscellaneous">
    <text>Major glycoprotein, comprises over 80% of the envelope proteins present in virus particle.</text>
</comment>
<comment type="miscellaneous">
    <text>The extent of infection into host organism is determined by HA. Influenza viruses bud from the apical surface of polarized epithelial cells (e.g. bronchial epithelial cells) into lumen of lungs and are therefore usually pneumotropic. The reason is that HA is cleaved by tryptase clara which is restricted to lungs. However, HAs of H5 and H7 pantropic avian viruses subtypes can be cleaved by furin and subtilisin-type enzymes, allowing the virus to grow in other organs than lungs.</text>
</comment>
<comment type="miscellaneous">
    <text>The influenza B genome consist of 8 RNA segments. Genetic variation of hemagglutinin and/or neuraminidase genes results in the emergence of new influenza strains. The mechanism of variation can be the result of point mutations or the result of genetic reassortment between segments of two different strains.</text>
</comment>
<comment type="similarity">
    <text evidence="3">Belongs to the influenza viruses hemagglutinin family.</text>
</comment>
<evidence type="ECO:0000250" key="1"/>
<evidence type="ECO:0000255" key="2"/>
<evidence type="ECO:0000305" key="3"/>
<sequence length="360" mass="39045">MKAIIVLLMVVTSNADRICTGITSSNSPHVVKTATQGEVNVTGVIPLTTTPTKSHFANLKGTKTRGKLCPNCLNCTDLDVALARPMCIGTIPSAKASILHEVRPVTSGCFPIMHDRTKIRQLPNLLRGYENIRLSTHNVINAERAPGGPYRLGTSGSCPNVTSRSGFFATMAWAVPRDNKTATNPLTVEVPYICTKGEDQITVWGFHSDNKIQMNKLYGDSNPQKFTSSANGVTTHYVSQIGGFPNQTEDGGLPQSGRIVVDYMVQKPGKTGTIVYQRGVLLPQKVWCASGRSKVIKGSLPLIGEADCLHEKYGGLNKSKPYYTGEHAKAIGNCPIWVKTPLKLANGTKYRPPAKLLKER</sequence>